<name>YCIB_BUCAP</name>
<dbReference type="EMBL" id="Z19055">
    <property type="protein sequence ID" value="CAA79505.1"/>
    <property type="molecule type" value="Genomic_DNA"/>
</dbReference>
<dbReference type="EMBL" id="AE013218">
    <property type="protein sequence ID" value="AAM67822.1"/>
    <property type="molecule type" value="Genomic_DNA"/>
</dbReference>
<dbReference type="PIR" id="F49897">
    <property type="entry name" value="F49897"/>
</dbReference>
<dbReference type="RefSeq" id="WP_011053789.1">
    <property type="nucleotide sequence ID" value="NC_004061.1"/>
</dbReference>
<dbReference type="STRING" id="198804.BUsg_264"/>
<dbReference type="GeneID" id="93003734"/>
<dbReference type="KEGG" id="bas:BUsg_264"/>
<dbReference type="eggNOG" id="COG2917">
    <property type="taxonomic scope" value="Bacteria"/>
</dbReference>
<dbReference type="HOGENOM" id="CLU_089554_2_0_6"/>
<dbReference type="Proteomes" id="UP000000416">
    <property type="component" value="Chromosome"/>
</dbReference>
<dbReference type="GO" id="GO:0005886">
    <property type="term" value="C:plasma membrane"/>
    <property type="evidence" value="ECO:0007669"/>
    <property type="project" value="UniProtKB-SubCell"/>
</dbReference>
<dbReference type="HAMAP" id="MF_00189">
    <property type="entry name" value="YciB"/>
    <property type="match status" value="1"/>
</dbReference>
<dbReference type="InterPro" id="IPR006008">
    <property type="entry name" value="YciB"/>
</dbReference>
<dbReference type="NCBIfam" id="TIGR00997">
    <property type="entry name" value="ispZ"/>
    <property type="match status" value="1"/>
</dbReference>
<dbReference type="NCBIfam" id="NF001324">
    <property type="entry name" value="PRK00259.1-2"/>
    <property type="match status" value="1"/>
</dbReference>
<dbReference type="PANTHER" id="PTHR36917:SF1">
    <property type="entry name" value="INNER MEMBRANE-SPANNING PROTEIN YCIB"/>
    <property type="match status" value="1"/>
</dbReference>
<dbReference type="PANTHER" id="PTHR36917">
    <property type="entry name" value="INTRACELLULAR SEPTATION PROTEIN A-RELATED"/>
    <property type="match status" value="1"/>
</dbReference>
<dbReference type="Pfam" id="PF04279">
    <property type="entry name" value="IspA"/>
    <property type="match status" value="1"/>
</dbReference>
<evidence type="ECO:0000255" key="1">
    <source>
        <dbReference type="HAMAP-Rule" id="MF_00189"/>
    </source>
</evidence>
<keyword id="KW-0997">Cell inner membrane</keyword>
<keyword id="KW-1003">Cell membrane</keyword>
<keyword id="KW-0472">Membrane</keyword>
<keyword id="KW-0812">Transmembrane</keyword>
<keyword id="KW-1133">Transmembrane helix</keyword>
<gene>
    <name evidence="1" type="primary">yciB</name>
    <name type="ordered locus">BUsg_264</name>
</gene>
<sequence>MKKILNLLPIFTFFIFYRFYDIFIASKSLIFISGLTCLLYWIIYKEIDKINLFSFITIAIFGSLTIIFHNSQFIKWKITIIYMIFSVILFISQFFMKKPIIQRFLEKDIKISDLYWKKINFFWALFFLFCSILNIYVALCLPEKIWVNFKVFGLSFLMFLSILITSIYINFKMLKEK</sequence>
<proteinExistence type="inferred from homology"/>
<organism>
    <name type="scientific">Buchnera aphidicola subsp. Schizaphis graminum (strain Sg)</name>
    <dbReference type="NCBI Taxonomy" id="198804"/>
    <lineage>
        <taxon>Bacteria</taxon>
        <taxon>Pseudomonadati</taxon>
        <taxon>Pseudomonadota</taxon>
        <taxon>Gammaproteobacteria</taxon>
        <taxon>Enterobacterales</taxon>
        <taxon>Erwiniaceae</taxon>
        <taxon>Buchnera</taxon>
    </lineage>
</organism>
<feature type="chain" id="PRO_0000206528" description="Inner membrane-spanning protein YciB">
    <location>
        <begin position="1"/>
        <end position="177"/>
    </location>
</feature>
<feature type="transmembrane region" description="Helical" evidence="1">
    <location>
        <begin position="22"/>
        <end position="42"/>
    </location>
</feature>
<feature type="transmembrane region" description="Helical" evidence="1">
    <location>
        <begin position="50"/>
        <end position="70"/>
    </location>
</feature>
<feature type="transmembrane region" description="Helical" evidence="1">
    <location>
        <begin position="76"/>
        <end position="96"/>
    </location>
</feature>
<feature type="transmembrane region" description="Helical" evidence="1">
    <location>
        <begin position="121"/>
        <end position="141"/>
    </location>
</feature>
<feature type="transmembrane region" description="Helical" evidence="1">
    <location>
        <begin position="151"/>
        <end position="171"/>
    </location>
</feature>
<accession>P42397</accession>
<protein>
    <recommendedName>
        <fullName evidence="1">Inner membrane-spanning protein YciB</fullName>
    </recommendedName>
</protein>
<comment type="function">
    <text evidence="1">Plays a role in cell envelope biogenesis, maintenance of cell envelope integrity and membrane homeostasis.</text>
</comment>
<comment type="subcellular location">
    <subcellularLocation>
        <location evidence="1">Cell inner membrane</location>
        <topology evidence="1">Multi-pass membrane protein</topology>
    </subcellularLocation>
</comment>
<comment type="similarity">
    <text evidence="1">Belongs to the YciB family.</text>
</comment>
<reference key="1">
    <citation type="journal article" date="1993" name="J. Bacteriol.">
        <title>Molecular cloning and nucleotide sequence of a putative trpDC(F)BA operon in Buchnera aphidicola (endosymbiont of the aphid Schizaphis graminum).</title>
        <authorList>
            <person name="Munson M.A."/>
            <person name="Baumann P."/>
        </authorList>
    </citation>
    <scope>NUCLEOTIDE SEQUENCE [GENOMIC DNA]</scope>
</reference>
<reference key="2">
    <citation type="journal article" date="2002" name="Science">
        <title>50 million years of genomic stasis in endosymbiotic bacteria.</title>
        <authorList>
            <person name="Tamas I."/>
            <person name="Klasson L."/>
            <person name="Canbaeck B."/>
            <person name="Naeslund A.K."/>
            <person name="Eriksson A.-S."/>
            <person name="Wernegreen J.J."/>
            <person name="Sandstroem J.P."/>
            <person name="Moran N.A."/>
            <person name="Andersson S.G.E."/>
        </authorList>
    </citation>
    <scope>NUCLEOTIDE SEQUENCE [LARGE SCALE GENOMIC DNA]</scope>
    <source>
        <strain>Sg</strain>
    </source>
</reference>